<dbReference type="EC" id="5.2.1.8"/>
<dbReference type="EMBL" id="AL022223">
    <property type="protein sequence ID" value="CAA18215.1"/>
    <property type="status" value="ALT_SEQ"/>
    <property type="molecule type" value="Genomic_DNA"/>
</dbReference>
<dbReference type="EMBL" id="AL078465">
    <property type="status" value="NOT_ANNOTATED_CDS"/>
    <property type="molecule type" value="Genomic_DNA"/>
</dbReference>
<dbReference type="EMBL" id="AL161565">
    <property type="protein sequence ID" value="CAB79510.1"/>
    <property type="status" value="ALT_SEQ"/>
    <property type="molecule type" value="Genomic_DNA"/>
</dbReference>
<dbReference type="EMBL" id="CP002687">
    <property type="protein sequence ID" value="AEE85218.1"/>
    <property type="molecule type" value="Genomic_DNA"/>
</dbReference>
<dbReference type="EMBL" id="AK117832">
    <property type="protein sequence ID" value="BAC42474.1"/>
    <property type="molecule type" value="mRNA"/>
</dbReference>
<dbReference type="EMBL" id="AF439821">
    <property type="protein sequence ID" value="AAL27493.1"/>
    <property type="molecule type" value="mRNA"/>
</dbReference>
<dbReference type="EMBL" id="AY125564">
    <property type="protein sequence ID" value="AAM78074.1"/>
    <property type="molecule type" value="mRNA"/>
</dbReference>
<dbReference type="PIR" id="T05049">
    <property type="entry name" value="T05049"/>
</dbReference>
<dbReference type="RefSeq" id="NP_567750.1">
    <property type="nucleotide sequence ID" value="NM_118789.3"/>
</dbReference>
<dbReference type="SMR" id="Q944B0"/>
<dbReference type="FunCoup" id="Q944B0">
    <property type="interactions" value="860"/>
</dbReference>
<dbReference type="STRING" id="3702.Q944B0"/>
<dbReference type="MetOSite" id="Q944B0"/>
<dbReference type="PaxDb" id="3702-AT4G26555.1"/>
<dbReference type="EnsemblPlants" id="AT4G26555.1">
    <property type="protein sequence ID" value="AT4G26555.1"/>
    <property type="gene ID" value="AT4G26555"/>
</dbReference>
<dbReference type="GeneID" id="828762"/>
<dbReference type="Gramene" id="AT4G26555.1">
    <property type="protein sequence ID" value="AT4G26555.1"/>
    <property type="gene ID" value="AT4G26555"/>
</dbReference>
<dbReference type="KEGG" id="ath:AT4G26555"/>
<dbReference type="Araport" id="AT4G26555"/>
<dbReference type="TAIR" id="AT4G26555"/>
<dbReference type="eggNOG" id="KOG2887">
    <property type="taxonomic scope" value="Eukaryota"/>
</dbReference>
<dbReference type="HOGENOM" id="CLU_089785_0_0_1"/>
<dbReference type="InParanoid" id="Q944B0"/>
<dbReference type="OrthoDB" id="1902587at2759"/>
<dbReference type="PhylomeDB" id="Q944B0"/>
<dbReference type="PRO" id="PR:Q944B0"/>
<dbReference type="Proteomes" id="UP000006548">
    <property type="component" value="Chromosome 4"/>
</dbReference>
<dbReference type="ExpressionAtlas" id="Q944B0">
    <property type="expression patterns" value="baseline and differential"/>
</dbReference>
<dbReference type="GO" id="GO:0009507">
    <property type="term" value="C:chloroplast"/>
    <property type="evidence" value="ECO:0007005"/>
    <property type="project" value="TAIR"/>
</dbReference>
<dbReference type="GO" id="GO:0009543">
    <property type="term" value="C:chloroplast thylakoid lumen"/>
    <property type="evidence" value="ECO:0007669"/>
    <property type="project" value="UniProtKB-SubCell"/>
</dbReference>
<dbReference type="GO" id="GO:0031977">
    <property type="term" value="C:thylakoid lumen"/>
    <property type="evidence" value="ECO:0000314"/>
    <property type="project" value="TAIR"/>
</dbReference>
<dbReference type="GO" id="GO:0003755">
    <property type="term" value="F:peptidyl-prolyl cis-trans isomerase activity"/>
    <property type="evidence" value="ECO:0007669"/>
    <property type="project" value="UniProtKB-KW"/>
</dbReference>
<dbReference type="GO" id="GO:0031647">
    <property type="term" value="P:regulation of protein stability"/>
    <property type="evidence" value="ECO:0000315"/>
    <property type="project" value="TAIR"/>
</dbReference>
<dbReference type="GO" id="GO:0009644">
    <property type="term" value="P:response to high light intensity"/>
    <property type="evidence" value="ECO:0000315"/>
    <property type="project" value="TAIR"/>
</dbReference>
<dbReference type="GO" id="GO:0009414">
    <property type="term" value="P:response to water deprivation"/>
    <property type="evidence" value="ECO:0000315"/>
    <property type="project" value="TAIR"/>
</dbReference>
<dbReference type="FunFam" id="3.10.50.40:FF:000059">
    <property type="entry name" value="Peptidylprolyl isomerase"/>
    <property type="match status" value="1"/>
</dbReference>
<dbReference type="Gene3D" id="3.10.50.40">
    <property type="match status" value="1"/>
</dbReference>
<dbReference type="InterPro" id="IPR046357">
    <property type="entry name" value="PPIase_dom_sf"/>
</dbReference>
<dbReference type="InterPro" id="IPR001179">
    <property type="entry name" value="PPIase_FKBP_dom"/>
</dbReference>
<dbReference type="PANTHER" id="PTHR43811">
    <property type="entry name" value="FKBP-TYPE PEPTIDYL-PROLYL CIS-TRANS ISOMERASE FKPA"/>
    <property type="match status" value="1"/>
</dbReference>
<dbReference type="PANTHER" id="PTHR43811:SF26">
    <property type="entry name" value="PEPTIDYL-PROLYL CIS-TRANS ISOMERASE FKBP16-1, CHLOROPLASTIC"/>
    <property type="match status" value="1"/>
</dbReference>
<dbReference type="Pfam" id="PF00254">
    <property type="entry name" value="FKBP_C"/>
    <property type="match status" value="1"/>
</dbReference>
<dbReference type="SUPFAM" id="SSF54534">
    <property type="entry name" value="FKBP-like"/>
    <property type="match status" value="1"/>
</dbReference>
<dbReference type="PROSITE" id="PS50059">
    <property type="entry name" value="FKBP_PPIASE"/>
    <property type="match status" value="1"/>
</dbReference>
<reference key="1">
    <citation type="journal article" date="1999" name="Nature">
        <title>Sequence and analysis of chromosome 4 of the plant Arabidopsis thaliana.</title>
        <authorList>
            <person name="Mayer K.F.X."/>
            <person name="Schueller C."/>
            <person name="Wambutt R."/>
            <person name="Murphy G."/>
            <person name="Volckaert G."/>
            <person name="Pohl T."/>
            <person name="Duesterhoeft A."/>
            <person name="Stiekema W."/>
            <person name="Entian K.-D."/>
            <person name="Terryn N."/>
            <person name="Harris B."/>
            <person name="Ansorge W."/>
            <person name="Brandt P."/>
            <person name="Grivell L.A."/>
            <person name="Rieger M."/>
            <person name="Weichselgartner M."/>
            <person name="de Simone V."/>
            <person name="Obermaier B."/>
            <person name="Mache R."/>
            <person name="Mueller M."/>
            <person name="Kreis M."/>
            <person name="Delseny M."/>
            <person name="Puigdomenech P."/>
            <person name="Watson M."/>
            <person name="Schmidtheini T."/>
            <person name="Reichert B."/>
            <person name="Portetelle D."/>
            <person name="Perez-Alonso M."/>
            <person name="Boutry M."/>
            <person name="Bancroft I."/>
            <person name="Vos P."/>
            <person name="Hoheisel J."/>
            <person name="Zimmermann W."/>
            <person name="Wedler H."/>
            <person name="Ridley P."/>
            <person name="Langham S.-A."/>
            <person name="McCullagh B."/>
            <person name="Bilham L."/>
            <person name="Robben J."/>
            <person name="van der Schueren J."/>
            <person name="Grymonprez B."/>
            <person name="Chuang Y.-J."/>
            <person name="Vandenbussche F."/>
            <person name="Braeken M."/>
            <person name="Weltjens I."/>
            <person name="Voet M."/>
            <person name="Bastiaens I."/>
            <person name="Aert R."/>
            <person name="Defoor E."/>
            <person name="Weitzenegger T."/>
            <person name="Bothe G."/>
            <person name="Ramsperger U."/>
            <person name="Hilbert H."/>
            <person name="Braun M."/>
            <person name="Holzer E."/>
            <person name="Brandt A."/>
            <person name="Peters S."/>
            <person name="van Staveren M."/>
            <person name="Dirkse W."/>
            <person name="Mooijman P."/>
            <person name="Klein Lankhorst R."/>
            <person name="Rose M."/>
            <person name="Hauf J."/>
            <person name="Koetter P."/>
            <person name="Berneiser S."/>
            <person name="Hempel S."/>
            <person name="Feldpausch M."/>
            <person name="Lamberth S."/>
            <person name="Van den Daele H."/>
            <person name="De Keyser A."/>
            <person name="Buysshaert C."/>
            <person name="Gielen J."/>
            <person name="Villarroel R."/>
            <person name="De Clercq R."/>
            <person name="van Montagu M."/>
            <person name="Rogers J."/>
            <person name="Cronin A."/>
            <person name="Quail M.A."/>
            <person name="Bray-Allen S."/>
            <person name="Clark L."/>
            <person name="Doggett J."/>
            <person name="Hall S."/>
            <person name="Kay M."/>
            <person name="Lennard N."/>
            <person name="McLay K."/>
            <person name="Mayes R."/>
            <person name="Pettett A."/>
            <person name="Rajandream M.A."/>
            <person name="Lyne M."/>
            <person name="Benes V."/>
            <person name="Rechmann S."/>
            <person name="Borkova D."/>
            <person name="Bloecker H."/>
            <person name="Scharfe M."/>
            <person name="Grimm M."/>
            <person name="Loehnert T.-H."/>
            <person name="Dose S."/>
            <person name="de Haan M."/>
            <person name="Maarse A.C."/>
            <person name="Schaefer M."/>
            <person name="Mueller-Auer S."/>
            <person name="Gabel C."/>
            <person name="Fuchs M."/>
            <person name="Fartmann B."/>
            <person name="Granderath K."/>
            <person name="Dauner D."/>
            <person name="Herzl A."/>
            <person name="Neumann S."/>
            <person name="Argiriou A."/>
            <person name="Vitale D."/>
            <person name="Liguori R."/>
            <person name="Piravandi E."/>
            <person name="Massenet O."/>
            <person name="Quigley F."/>
            <person name="Clabauld G."/>
            <person name="Muendlein A."/>
            <person name="Felber R."/>
            <person name="Schnabl S."/>
            <person name="Hiller R."/>
            <person name="Schmidt W."/>
            <person name="Lecharny A."/>
            <person name="Aubourg S."/>
            <person name="Chefdor F."/>
            <person name="Cooke R."/>
            <person name="Berger C."/>
            <person name="Monfort A."/>
            <person name="Casacuberta E."/>
            <person name="Gibbons T."/>
            <person name="Weber N."/>
            <person name="Vandenbol M."/>
            <person name="Bargues M."/>
            <person name="Terol J."/>
            <person name="Torres A."/>
            <person name="Perez-Perez A."/>
            <person name="Purnelle B."/>
            <person name="Bent E."/>
            <person name="Johnson S."/>
            <person name="Tacon D."/>
            <person name="Jesse T."/>
            <person name="Heijnen L."/>
            <person name="Schwarz S."/>
            <person name="Scholler P."/>
            <person name="Heber S."/>
            <person name="Francs P."/>
            <person name="Bielke C."/>
            <person name="Frishman D."/>
            <person name="Haase D."/>
            <person name="Lemcke K."/>
            <person name="Mewes H.-W."/>
            <person name="Stocker S."/>
            <person name="Zaccaria P."/>
            <person name="Bevan M."/>
            <person name="Wilson R.K."/>
            <person name="de la Bastide M."/>
            <person name="Habermann K."/>
            <person name="Parnell L."/>
            <person name="Dedhia N."/>
            <person name="Gnoj L."/>
            <person name="Schutz K."/>
            <person name="Huang E."/>
            <person name="Spiegel L."/>
            <person name="Sekhon M."/>
            <person name="Murray J."/>
            <person name="Sheet P."/>
            <person name="Cordes M."/>
            <person name="Abu-Threideh J."/>
            <person name="Stoneking T."/>
            <person name="Kalicki J."/>
            <person name="Graves T."/>
            <person name="Harmon G."/>
            <person name="Edwards J."/>
            <person name="Latreille P."/>
            <person name="Courtney L."/>
            <person name="Cloud J."/>
            <person name="Abbott A."/>
            <person name="Scott K."/>
            <person name="Johnson D."/>
            <person name="Minx P."/>
            <person name="Bentley D."/>
            <person name="Fulton B."/>
            <person name="Miller N."/>
            <person name="Greco T."/>
            <person name="Kemp K."/>
            <person name="Kramer J."/>
            <person name="Fulton L."/>
            <person name="Mardis E."/>
            <person name="Dante M."/>
            <person name="Pepin K."/>
            <person name="Hillier L.W."/>
            <person name="Nelson J."/>
            <person name="Spieth J."/>
            <person name="Ryan E."/>
            <person name="Andrews S."/>
            <person name="Geisel C."/>
            <person name="Layman D."/>
            <person name="Du H."/>
            <person name="Ali J."/>
            <person name="Berghoff A."/>
            <person name="Jones K."/>
            <person name="Drone K."/>
            <person name="Cotton M."/>
            <person name="Joshu C."/>
            <person name="Antonoiu B."/>
            <person name="Zidanic M."/>
            <person name="Strong C."/>
            <person name="Sun H."/>
            <person name="Lamar B."/>
            <person name="Yordan C."/>
            <person name="Ma P."/>
            <person name="Zhong J."/>
            <person name="Preston R."/>
            <person name="Vil D."/>
            <person name="Shekher M."/>
            <person name="Matero A."/>
            <person name="Shah R."/>
            <person name="Swaby I.K."/>
            <person name="O'Shaughnessy A."/>
            <person name="Rodriguez M."/>
            <person name="Hoffman J."/>
            <person name="Till S."/>
            <person name="Granat S."/>
            <person name="Shohdy N."/>
            <person name="Hasegawa A."/>
            <person name="Hameed A."/>
            <person name="Lodhi M."/>
            <person name="Johnson A."/>
            <person name="Chen E."/>
            <person name="Marra M.A."/>
            <person name="Martienssen R."/>
            <person name="McCombie W.R."/>
        </authorList>
    </citation>
    <scope>NUCLEOTIDE SEQUENCE [LARGE SCALE GENOMIC DNA]</scope>
    <source>
        <strain>cv. Columbia</strain>
    </source>
</reference>
<reference key="2">
    <citation type="journal article" date="2017" name="Plant J.">
        <title>Araport11: a complete reannotation of the Arabidopsis thaliana reference genome.</title>
        <authorList>
            <person name="Cheng C.Y."/>
            <person name="Krishnakumar V."/>
            <person name="Chan A.P."/>
            <person name="Thibaud-Nissen F."/>
            <person name="Schobel S."/>
            <person name="Town C.D."/>
        </authorList>
    </citation>
    <scope>GENOME REANNOTATION</scope>
    <source>
        <strain>cv. Columbia</strain>
    </source>
</reference>
<reference key="3">
    <citation type="journal article" date="2002" name="Science">
        <title>Functional annotation of a full-length Arabidopsis cDNA collection.</title>
        <authorList>
            <person name="Seki M."/>
            <person name="Narusaka M."/>
            <person name="Kamiya A."/>
            <person name="Ishida J."/>
            <person name="Satou M."/>
            <person name="Sakurai T."/>
            <person name="Nakajima M."/>
            <person name="Enju A."/>
            <person name="Akiyama K."/>
            <person name="Oono Y."/>
            <person name="Muramatsu M."/>
            <person name="Hayashizaki Y."/>
            <person name="Kawai J."/>
            <person name="Carninci P."/>
            <person name="Itoh M."/>
            <person name="Ishii Y."/>
            <person name="Arakawa T."/>
            <person name="Shibata K."/>
            <person name="Shinagawa A."/>
            <person name="Shinozaki K."/>
        </authorList>
    </citation>
    <scope>NUCLEOTIDE SEQUENCE [LARGE SCALE MRNA]</scope>
    <source>
        <strain>cv. Columbia</strain>
    </source>
</reference>
<reference key="4">
    <citation type="journal article" date="2003" name="Science">
        <title>Empirical analysis of transcriptional activity in the Arabidopsis genome.</title>
        <authorList>
            <person name="Yamada K."/>
            <person name="Lim J."/>
            <person name="Dale J.M."/>
            <person name="Chen H."/>
            <person name="Shinn P."/>
            <person name="Palm C.J."/>
            <person name="Southwick A.M."/>
            <person name="Wu H.C."/>
            <person name="Kim C.J."/>
            <person name="Nguyen M."/>
            <person name="Pham P.K."/>
            <person name="Cheuk R.F."/>
            <person name="Karlin-Newmann G."/>
            <person name="Liu S.X."/>
            <person name="Lam B."/>
            <person name="Sakano H."/>
            <person name="Wu T."/>
            <person name="Yu G."/>
            <person name="Miranda M."/>
            <person name="Quach H.L."/>
            <person name="Tripp M."/>
            <person name="Chang C.H."/>
            <person name="Lee J.M."/>
            <person name="Toriumi M.J."/>
            <person name="Chan M.M."/>
            <person name="Tang C.C."/>
            <person name="Onodera C.S."/>
            <person name="Deng J.M."/>
            <person name="Akiyama K."/>
            <person name="Ansari Y."/>
            <person name="Arakawa T."/>
            <person name="Banh J."/>
            <person name="Banno F."/>
            <person name="Bowser L."/>
            <person name="Brooks S.Y."/>
            <person name="Carninci P."/>
            <person name="Chao Q."/>
            <person name="Choy N."/>
            <person name="Enju A."/>
            <person name="Goldsmith A.D."/>
            <person name="Gurjal M."/>
            <person name="Hansen N.F."/>
            <person name="Hayashizaki Y."/>
            <person name="Johnson-Hopson C."/>
            <person name="Hsuan V.W."/>
            <person name="Iida K."/>
            <person name="Karnes M."/>
            <person name="Khan S."/>
            <person name="Koesema E."/>
            <person name="Ishida J."/>
            <person name="Jiang P.X."/>
            <person name="Jones T."/>
            <person name="Kawai J."/>
            <person name="Kamiya A."/>
            <person name="Meyers C."/>
            <person name="Nakajima M."/>
            <person name="Narusaka M."/>
            <person name="Seki M."/>
            <person name="Sakurai T."/>
            <person name="Satou M."/>
            <person name="Tamse R."/>
            <person name="Vaysberg M."/>
            <person name="Wallender E.K."/>
            <person name="Wong C."/>
            <person name="Yamamura Y."/>
            <person name="Yuan S."/>
            <person name="Shinozaki K."/>
            <person name="Davis R.W."/>
            <person name="Theologis A."/>
            <person name="Ecker J.R."/>
        </authorList>
    </citation>
    <scope>NUCLEOTIDE SEQUENCE [LARGE SCALE MRNA]</scope>
    <source>
        <strain>cv. Columbia</strain>
    </source>
</reference>
<reference key="5">
    <citation type="journal article" date="2004" name="Plant Physiol.">
        <title>Immunophilins and parvulins. Superfamily of peptidyl prolyl isomerases in Arabidopsis.</title>
        <authorList>
            <person name="He Z."/>
            <person name="Li L."/>
            <person name="Luan S."/>
        </authorList>
    </citation>
    <scope>GENE FAMILY</scope>
    <scope>NOMENCLATURE</scope>
</reference>
<protein>
    <recommendedName>
        <fullName>Peptidyl-prolyl cis-trans isomerase FKBP16-1, chloroplastic</fullName>
        <shortName>PPIase FKBP16-1</shortName>
        <ecNumber>5.2.1.8</ecNumber>
    </recommendedName>
    <alternativeName>
        <fullName>FK506-binding protein 16-1</fullName>
        <shortName>AtFKBP16-1</shortName>
    </alternativeName>
    <alternativeName>
        <fullName>Immunophilin FKBP16-1</fullName>
    </alternativeName>
    <alternativeName>
        <fullName>Rotamase</fullName>
    </alternativeName>
</protein>
<organism>
    <name type="scientific">Arabidopsis thaliana</name>
    <name type="common">Mouse-ear cress</name>
    <dbReference type="NCBI Taxonomy" id="3702"/>
    <lineage>
        <taxon>Eukaryota</taxon>
        <taxon>Viridiplantae</taxon>
        <taxon>Streptophyta</taxon>
        <taxon>Embryophyta</taxon>
        <taxon>Tracheophyta</taxon>
        <taxon>Spermatophyta</taxon>
        <taxon>Magnoliopsida</taxon>
        <taxon>eudicotyledons</taxon>
        <taxon>Gunneridae</taxon>
        <taxon>Pentapetalae</taxon>
        <taxon>rosids</taxon>
        <taxon>malvids</taxon>
        <taxon>Brassicales</taxon>
        <taxon>Brassicaceae</taxon>
        <taxon>Camelineae</taxon>
        <taxon>Arabidopsis</taxon>
    </lineage>
</organism>
<sequence>MAMAMEISLPFVGSSMALSAGKSRNSVSRISRVGFSSVSAVHVPRRMFMQLSGFGSVLTLLDFPSLAAPVPQMKEPEVIRTLKLPSGVRYQEIIEGEGREAHEGDLVELNYVCRRANGYFVHSTVDQFSGESSPVKLILDENDVIEGLKEVLVGMKAGGKRRALIPPSVGYINETLKPIPEEFGPRRSLLSHANEPLVFEIQLLKVL</sequence>
<comment type="function">
    <text evidence="1">PPIases accelerate the folding of proteins. It catalyzes the cis-trans isomerization of proline imidic peptide bonds in oligopeptides (By similarity).</text>
</comment>
<comment type="catalytic activity">
    <reaction>
        <text>[protein]-peptidylproline (omega=180) = [protein]-peptidylproline (omega=0)</text>
        <dbReference type="Rhea" id="RHEA:16237"/>
        <dbReference type="Rhea" id="RHEA-COMP:10747"/>
        <dbReference type="Rhea" id="RHEA-COMP:10748"/>
        <dbReference type="ChEBI" id="CHEBI:83833"/>
        <dbReference type="ChEBI" id="CHEBI:83834"/>
        <dbReference type="EC" id="5.2.1.8"/>
    </reaction>
</comment>
<comment type="subcellular location">
    <subcellularLocation>
        <location evidence="1">Plastid</location>
        <location evidence="1">Chloroplast thylakoid lumen</location>
    </subcellularLocation>
</comment>
<comment type="similarity">
    <text evidence="3">Belongs to the FKBP-type PPIase family.</text>
</comment>
<comment type="sequence caution" evidence="3">
    <conflict type="erroneous gene model prediction">
        <sequence resource="EMBL-CDS" id="CAA18215"/>
    </conflict>
</comment>
<comment type="sequence caution" evidence="3">
    <conflict type="erroneous gene model prediction">
        <sequence resource="EMBL-CDS" id="CAB79510"/>
    </conflict>
</comment>
<evidence type="ECO:0000250" key="1"/>
<evidence type="ECO:0000255" key="2">
    <source>
        <dbReference type="PROSITE-ProRule" id="PRU00277"/>
    </source>
</evidence>
<evidence type="ECO:0000305" key="3"/>
<gene>
    <name type="primary">FKBP16-1</name>
    <name type="ordered locus">At4g26555</name>
    <name type="ORF">M3E9.20</name>
    <name type="ORF">T15N24</name>
</gene>
<accession>Q944B0</accession>
<accession>O65579</accession>
<name>FK161_ARATH</name>
<proteinExistence type="evidence at transcript level"/>
<feature type="transit peptide" description="Chloroplast" evidence="3">
    <location>
        <begin position="1"/>
        <end status="unknown"/>
    </location>
</feature>
<feature type="transit peptide" description="Thylakoid" evidence="3">
    <location>
        <begin status="unknown"/>
        <end position="67"/>
    </location>
</feature>
<feature type="chain" id="PRO_0000416130" description="Peptidyl-prolyl cis-trans isomerase FKBP16-1, chloroplastic">
    <location>
        <begin position="68"/>
        <end position="207"/>
    </location>
</feature>
<feature type="domain" description="PPIase FKBP-type" evidence="2">
    <location>
        <begin position="104"/>
        <end position="207"/>
    </location>
</feature>
<keyword id="KW-0150">Chloroplast</keyword>
<keyword id="KW-0413">Isomerase</keyword>
<keyword id="KW-0934">Plastid</keyword>
<keyword id="KW-1185">Reference proteome</keyword>
<keyword id="KW-0697">Rotamase</keyword>
<keyword id="KW-0793">Thylakoid</keyword>
<keyword id="KW-0809">Transit peptide</keyword>